<sequence>MQKLLSVIPSVDKLIKQLAGIALIQQYGHQAFVAQARQVIDSLRQHILTHQSLPVDQPADNLLSLIATNLQQTQQIAMKKVFNLTGTILHTNLGRAIWSEAAITAASDAMRHHSALEFDIEAGKRSHRDNTISQLLCEITGAEAACVVNNNAAAVLLMLATFAKGKEVIVSRGELVEIGGAFRIPDIMQQAGCKLVEVGTTNRTHLKDYRAAINENTALLMKVHTSNYQIQGFTHSVSEQQLVELGQEVGLPVMSDLGSGSLIDMATFGLPAEPLVQQKVASGVALVTFSADKLLGGPQAGIIVGKKADIEALQAHPLKRVLRCDKVILAGLEATLRHYLLPDQLTTHLPTLSLLTQSIDHLRVKATRLQNSLSKRLDARYHLQIEQSLAQIGSGALPTERLASLAVTITAPTQRDLLQLEQQFKMLKYPIIGRFAEQKLWLDLRSVAQFDQLIEMLEEK</sequence>
<protein>
    <recommendedName>
        <fullName evidence="1">L-seryl-tRNA(Sec) selenium transferase</fullName>
        <ecNumber evidence="1">2.9.1.1</ecNumber>
    </recommendedName>
    <alternativeName>
        <fullName evidence="1">Selenocysteine synthase</fullName>
        <shortName evidence="1">Sec synthase</shortName>
    </alternativeName>
    <alternativeName>
        <fullName evidence="1">Selenocysteinyl-tRNA(Sec) synthase</fullName>
    </alternativeName>
</protein>
<reference key="1">
    <citation type="submission" date="2003-06" db="EMBL/GenBank/DDBJ databases">
        <title>The complete genome sequence of Haemophilus ducreyi.</title>
        <authorList>
            <person name="Munson R.S. Jr."/>
            <person name="Ray W.C."/>
            <person name="Mahairas G."/>
            <person name="Sabo P."/>
            <person name="Mungur R."/>
            <person name="Johnson L."/>
            <person name="Nguyen D."/>
            <person name="Wang J."/>
            <person name="Forst C."/>
            <person name="Hood L."/>
        </authorList>
    </citation>
    <scope>NUCLEOTIDE SEQUENCE [LARGE SCALE GENOMIC DNA]</scope>
    <source>
        <strain>35000HP / ATCC 700724</strain>
    </source>
</reference>
<organism>
    <name type="scientific">Haemophilus ducreyi (strain 35000HP / ATCC 700724)</name>
    <dbReference type="NCBI Taxonomy" id="233412"/>
    <lineage>
        <taxon>Bacteria</taxon>
        <taxon>Pseudomonadati</taxon>
        <taxon>Pseudomonadota</taxon>
        <taxon>Gammaproteobacteria</taxon>
        <taxon>Pasteurellales</taxon>
        <taxon>Pasteurellaceae</taxon>
        <taxon>Haemophilus</taxon>
    </lineage>
</organism>
<evidence type="ECO:0000255" key="1">
    <source>
        <dbReference type="HAMAP-Rule" id="MF_00423"/>
    </source>
</evidence>
<name>SELA_HAEDU</name>
<comment type="function">
    <text evidence="1">Converts seryl-tRNA(Sec) to selenocysteinyl-tRNA(Sec) required for selenoprotein biosynthesis.</text>
</comment>
<comment type="catalytic activity">
    <reaction evidence="1">
        <text>L-seryl-tRNA(Sec) + selenophosphate + H(+) = L-selenocysteinyl-tRNA(Sec) + phosphate</text>
        <dbReference type="Rhea" id="RHEA:22728"/>
        <dbReference type="Rhea" id="RHEA-COMP:9742"/>
        <dbReference type="Rhea" id="RHEA-COMP:9743"/>
        <dbReference type="ChEBI" id="CHEBI:15378"/>
        <dbReference type="ChEBI" id="CHEBI:16144"/>
        <dbReference type="ChEBI" id="CHEBI:43474"/>
        <dbReference type="ChEBI" id="CHEBI:78533"/>
        <dbReference type="ChEBI" id="CHEBI:78573"/>
        <dbReference type="EC" id="2.9.1.1"/>
    </reaction>
</comment>
<comment type="cofactor">
    <cofactor evidence="1">
        <name>pyridoxal 5'-phosphate</name>
        <dbReference type="ChEBI" id="CHEBI:597326"/>
    </cofactor>
</comment>
<comment type="pathway">
    <text evidence="1">Aminoacyl-tRNA biosynthesis; selenocysteinyl-tRNA(Sec) biosynthesis; selenocysteinyl-tRNA(Sec) from L-seryl-tRNA(Sec) (bacterial route): step 1/1.</text>
</comment>
<comment type="subcellular location">
    <subcellularLocation>
        <location evidence="1">Cytoplasm</location>
    </subcellularLocation>
</comment>
<comment type="similarity">
    <text evidence="1">Belongs to the SelA family.</text>
</comment>
<accession>Q7VKC2</accession>
<gene>
    <name evidence="1" type="primary">selA</name>
    <name type="ordered locus">HD_1994</name>
</gene>
<feature type="chain" id="PRO_0000189604" description="L-seryl-tRNA(Sec) selenium transferase">
    <location>
        <begin position="1"/>
        <end position="460"/>
    </location>
</feature>
<feature type="modified residue" description="N6-(pyridoxal phosphate)lysine" evidence="1">
    <location>
        <position position="293"/>
    </location>
</feature>
<proteinExistence type="inferred from homology"/>
<keyword id="KW-0963">Cytoplasm</keyword>
<keyword id="KW-0648">Protein biosynthesis</keyword>
<keyword id="KW-0663">Pyridoxal phosphate</keyword>
<keyword id="KW-1185">Reference proteome</keyword>
<keyword id="KW-0711">Selenium</keyword>
<keyword id="KW-0808">Transferase</keyword>
<dbReference type="EC" id="2.9.1.1" evidence="1"/>
<dbReference type="EMBL" id="AE017143">
    <property type="protein sequence ID" value="AAP96710.1"/>
    <property type="molecule type" value="Genomic_DNA"/>
</dbReference>
<dbReference type="RefSeq" id="WP_010945731.1">
    <property type="nucleotide sequence ID" value="NC_002940.2"/>
</dbReference>
<dbReference type="SMR" id="Q7VKC2"/>
<dbReference type="STRING" id="233412.HD_1994"/>
<dbReference type="DNASU" id="1491825"/>
<dbReference type="KEGG" id="hdu:HD_1994"/>
<dbReference type="eggNOG" id="COG1921">
    <property type="taxonomic scope" value="Bacteria"/>
</dbReference>
<dbReference type="HOGENOM" id="CLU_038142_1_0_6"/>
<dbReference type="OrthoDB" id="9787096at2"/>
<dbReference type="UniPathway" id="UPA00906">
    <property type="reaction ID" value="UER00896"/>
</dbReference>
<dbReference type="Proteomes" id="UP000001022">
    <property type="component" value="Chromosome"/>
</dbReference>
<dbReference type="GO" id="GO:0005737">
    <property type="term" value="C:cytoplasm"/>
    <property type="evidence" value="ECO:0007669"/>
    <property type="project" value="UniProtKB-SubCell"/>
</dbReference>
<dbReference type="GO" id="GO:0004125">
    <property type="term" value="F:L-seryl-tRNA(Sec) selenium transferase activity"/>
    <property type="evidence" value="ECO:0007669"/>
    <property type="project" value="UniProtKB-UniRule"/>
</dbReference>
<dbReference type="GO" id="GO:0001717">
    <property type="term" value="P:conversion of seryl-tRNAsec to selenocys-tRNAsec"/>
    <property type="evidence" value="ECO:0007669"/>
    <property type="project" value="UniProtKB-UniRule"/>
</dbReference>
<dbReference type="GO" id="GO:0001514">
    <property type="term" value="P:selenocysteine incorporation"/>
    <property type="evidence" value="ECO:0007669"/>
    <property type="project" value="UniProtKB-UniRule"/>
</dbReference>
<dbReference type="FunFam" id="3.40.640.10:FF:000028">
    <property type="entry name" value="L-seryl-tRNA(Sec) selenium transferase"/>
    <property type="match status" value="1"/>
</dbReference>
<dbReference type="Gene3D" id="3.90.1150.180">
    <property type="match status" value="1"/>
</dbReference>
<dbReference type="Gene3D" id="3.40.640.10">
    <property type="entry name" value="Type I PLP-dependent aspartate aminotransferase-like (Major domain)"/>
    <property type="match status" value="1"/>
</dbReference>
<dbReference type="HAMAP" id="MF_00423">
    <property type="entry name" value="SelA"/>
    <property type="match status" value="1"/>
</dbReference>
<dbReference type="InterPro" id="IPR015424">
    <property type="entry name" value="PyrdxlP-dep_Trfase"/>
</dbReference>
<dbReference type="InterPro" id="IPR015421">
    <property type="entry name" value="PyrdxlP-dep_Trfase_major"/>
</dbReference>
<dbReference type="InterPro" id="IPR018319">
    <property type="entry name" value="SelA-like"/>
</dbReference>
<dbReference type="InterPro" id="IPR004534">
    <property type="entry name" value="SelA_trans"/>
</dbReference>
<dbReference type="InterPro" id="IPR025862">
    <property type="entry name" value="SelA_trans_N_dom"/>
</dbReference>
<dbReference type="NCBIfam" id="TIGR00474">
    <property type="entry name" value="selA"/>
    <property type="match status" value="1"/>
</dbReference>
<dbReference type="PANTHER" id="PTHR32328">
    <property type="entry name" value="L-SERYL-TRNA(SEC) SELENIUM TRANSFERASE"/>
    <property type="match status" value="1"/>
</dbReference>
<dbReference type="PANTHER" id="PTHR32328:SF0">
    <property type="entry name" value="L-SERYL-TRNA(SEC) SELENIUM TRANSFERASE"/>
    <property type="match status" value="1"/>
</dbReference>
<dbReference type="Pfam" id="PF12390">
    <property type="entry name" value="Se-cys_synth_N"/>
    <property type="match status" value="1"/>
</dbReference>
<dbReference type="Pfam" id="PF03841">
    <property type="entry name" value="SelA"/>
    <property type="match status" value="1"/>
</dbReference>
<dbReference type="SUPFAM" id="SSF53383">
    <property type="entry name" value="PLP-dependent transferases"/>
    <property type="match status" value="1"/>
</dbReference>